<sequence length="40" mass="4675">MKVRNSLRALKKIPGAQIVRRRGRTFVINKKNPRMKARQG</sequence>
<reference key="1">
    <citation type="journal article" date="2013" name="Stand. Genomic Sci.">
        <title>Complete genome sequence of Arthrobacter sp. strain FB24.</title>
        <authorList>
            <person name="Nakatsu C.H."/>
            <person name="Barabote R."/>
            <person name="Thompson S."/>
            <person name="Bruce D."/>
            <person name="Detter C."/>
            <person name="Brettin T."/>
            <person name="Han C."/>
            <person name="Beasley F."/>
            <person name="Chen W."/>
            <person name="Konopka A."/>
            <person name="Xie G."/>
        </authorList>
    </citation>
    <scope>NUCLEOTIDE SEQUENCE [LARGE SCALE GENOMIC DNA]</scope>
    <source>
        <strain>FB24</strain>
    </source>
</reference>
<organism>
    <name type="scientific">Arthrobacter sp. (strain FB24)</name>
    <dbReference type="NCBI Taxonomy" id="290399"/>
    <lineage>
        <taxon>Bacteria</taxon>
        <taxon>Bacillati</taxon>
        <taxon>Actinomycetota</taxon>
        <taxon>Actinomycetes</taxon>
        <taxon>Micrococcales</taxon>
        <taxon>Micrococcaceae</taxon>
        <taxon>Arthrobacter</taxon>
    </lineage>
</organism>
<dbReference type="EMBL" id="CP000454">
    <property type="protein sequence ID" value="ABK04630.1"/>
    <property type="molecule type" value="Genomic_DNA"/>
</dbReference>
<dbReference type="SMR" id="A0K010"/>
<dbReference type="STRING" id="290399.Arth_3254"/>
<dbReference type="KEGG" id="art:Arth_3254"/>
<dbReference type="eggNOG" id="COG0257">
    <property type="taxonomic scope" value="Bacteria"/>
</dbReference>
<dbReference type="HOGENOM" id="CLU_135723_3_1_11"/>
<dbReference type="OrthoDB" id="9801558at2"/>
<dbReference type="Proteomes" id="UP000000754">
    <property type="component" value="Chromosome"/>
</dbReference>
<dbReference type="GO" id="GO:1990904">
    <property type="term" value="C:ribonucleoprotein complex"/>
    <property type="evidence" value="ECO:0007669"/>
    <property type="project" value="UniProtKB-KW"/>
</dbReference>
<dbReference type="GO" id="GO:0005840">
    <property type="term" value="C:ribosome"/>
    <property type="evidence" value="ECO:0007669"/>
    <property type="project" value="UniProtKB-KW"/>
</dbReference>
<dbReference type="GO" id="GO:0003735">
    <property type="term" value="F:structural constituent of ribosome"/>
    <property type="evidence" value="ECO:0007669"/>
    <property type="project" value="InterPro"/>
</dbReference>
<dbReference type="GO" id="GO:0006412">
    <property type="term" value="P:translation"/>
    <property type="evidence" value="ECO:0007669"/>
    <property type="project" value="UniProtKB-UniRule"/>
</dbReference>
<dbReference type="HAMAP" id="MF_00251">
    <property type="entry name" value="Ribosomal_bL36"/>
    <property type="match status" value="1"/>
</dbReference>
<dbReference type="InterPro" id="IPR000473">
    <property type="entry name" value="Ribosomal_bL36"/>
</dbReference>
<dbReference type="InterPro" id="IPR035977">
    <property type="entry name" value="Ribosomal_bL36_sp"/>
</dbReference>
<dbReference type="InterPro" id="IPR047621">
    <property type="entry name" value="Ribosomal_L36_bact"/>
</dbReference>
<dbReference type="NCBIfam" id="NF002021">
    <property type="entry name" value="PRK00831.1"/>
    <property type="match status" value="1"/>
</dbReference>
<dbReference type="PANTHER" id="PTHR47781">
    <property type="entry name" value="50S RIBOSOMAL PROTEIN L36 2"/>
    <property type="match status" value="1"/>
</dbReference>
<dbReference type="PANTHER" id="PTHR47781:SF1">
    <property type="entry name" value="LARGE RIBOSOMAL SUBUNIT PROTEIN BL36B"/>
    <property type="match status" value="1"/>
</dbReference>
<dbReference type="Pfam" id="PF00444">
    <property type="entry name" value="Ribosomal_L36"/>
    <property type="match status" value="1"/>
</dbReference>
<dbReference type="SUPFAM" id="SSF57840">
    <property type="entry name" value="Ribosomal protein L36"/>
    <property type="match status" value="1"/>
</dbReference>
<comment type="similarity">
    <text evidence="1">Belongs to the bacterial ribosomal protein bL36 family.</text>
</comment>
<evidence type="ECO:0000255" key="1">
    <source>
        <dbReference type="HAMAP-Rule" id="MF_00251"/>
    </source>
</evidence>
<evidence type="ECO:0000305" key="2"/>
<name>RL362_ARTS2</name>
<protein>
    <recommendedName>
        <fullName evidence="1">Large ribosomal subunit protein bL36B</fullName>
    </recommendedName>
    <alternativeName>
        <fullName evidence="2">50S ribosomal protein L36 2</fullName>
    </alternativeName>
</protein>
<feature type="chain" id="PRO_0000344645" description="Large ribosomal subunit protein bL36B">
    <location>
        <begin position="1"/>
        <end position="40"/>
    </location>
</feature>
<gene>
    <name evidence="1" type="primary">rpmJ2</name>
    <name type="ordered locus">Arth_3254</name>
</gene>
<proteinExistence type="inferred from homology"/>
<accession>A0K010</accession>
<keyword id="KW-1185">Reference proteome</keyword>
<keyword id="KW-0687">Ribonucleoprotein</keyword>
<keyword id="KW-0689">Ribosomal protein</keyword>